<sequence>MPKLGMQSIRRRQLIDATLEAINEVGMHDATIAQIARRAGVSTGIISHYFRDKNGLLEATMRDITSQLRDAVLNRLHALPQGSAELRLQAIVGGNFDETQVSSAAMKAWLAFWASSMHQPMLYRLQQVSSRRLLSNLVSEFRRELPRQQAQEAGYGLAALIDGLWLRAALSGKALDKPLAHSLTRHFITQHLPTD</sequence>
<comment type="function">
    <text evidence="1">Repressor involved in the biosynthesis of the osmoprotectant glycine betaine. It represses transcription of the choline transporter BetT and the genes of BetAB involved in the synthesis of glycine betaine (By similarity).</text>
</comment>
<comment type="pathway">
    <text>Amine and polyamine biosynthesis; betaine biosynthesis via choline pathway [regulation].</text>
</comment>
<comment type="sequence caution" evidence="3">
    <conflict type="erroneous initiation">
        <sequence resource="EMBL-CDS" id="ABE05843"/>
    </conflict>
    <text>Extended N-terminus.</text>
</comment>
<name>BETI_ECOUT</name>
<organism>
    <name type="scientific">Escherichia coli (strain UTI89 / UPEC)</name>
    <dbReference type="NCBI Taxonomy" id="364106"/>
    <lineage>
        <taxon>Bacteria</taxon>
        <taxon>Pseudomonadati</taxon>
        <taxon>Pseudomonadota</taxon>
        <taxon>Gammaproteobacteria</taxon>
        <taxon>Enterobacterales</taxon>
        <taxon>Enterobacteriaceae</taxon>
        <taxon>Escherichia</taxon>
    </lineage>
</organism>
<feature type="chain" id="PRO_0000257736" description="HTH-type transcriptional regulator BetI">
    <location>
        <begin position="1"/>
        <end position="195"/>
    </location>
</feature>
<feature type="domain" description="HTH tetR-type" evidence="2">
    <location>
        <begin position="8"/>
        <end position="68"/>
    </location>
</feature>
<feature type="DNA-binding region" description="H-T-H motif" evidence="2">
    <location>
        <begin position="31"/>
        <end position="50"/>
    </location>
</feature>
<gene>
    <name evidence="2" type="primary">betI</name>
    <name type="ordered locus">UTI89_C0342</name>
</gene>
<protein>
    <recommendedName>
        <fullName evidence="2">HTH-type transcriptional regulator BetI</fullName>
    </recommendedName>
</protein>
<dbReference type="EMBL" id="CP000243">
    <property type="protein sequence ID" value="ABE05843.1"/>
    <property type="status" value="ALT_INIT"/>
    <property type="molecule type" value="Genomic_DNA"/>
</dbReference>
<dbReference type="RefSeq" id="WP_001314510.1">
    <property type="nucleotide sequence ID" value="NZ_CP064825.1"/>
</dbReference>
<dbReference type="SMR" id="Q1RFM1"/>
<dbReference type="KEGG" id="eci:UTI89_C0342"/>
<dbReference type="HOGENOM" id="CLU_069356_15_4_6"/>
<dbReference type="UniPathway" id="UPA00529"/>
<dbReference type="Proteomes" id="UP000001952">
    <property type="component" value="Chromosome"/>
</dbReference>
<dbReference type="GO" id="GO:0003700">
    <property type="term" value="F:DNA-binding transcription factor activity"/>
    <property type="evidence" value="ECO:0007669"/>
    <property type="project" value="UniProtKB-UniRule"/>
</dbReference>
<dbReference type="GO" id="GO:0000976">
    <property type="term" value="F:transcription cis-regulatory region binding"/>
    <property type="evidence" value="ECO:0007669"/>
    <property type="project" value="TreeGrafter"/>
</dbReference>
<dbReference type="GO" id="GO:0019285">
    <property type="term" value="P:glycine betaine biosynthetic process from choline"/>
    <property type="evidence" value="ECO:0007669"/>
    <property type="project" value="UniProtKB-UniRule"/>
</dbReference>
<dbReference type="GO" id="GO:0045892">
    <property type="term" value="P:negative regulation of DNA-templated transcription"/>
    <property type="evidence" value="ECO:0007669"/>
    <property type="project" value="UniProtKB-UniRule"/>
</dbReference>
<dbReference type="FunFam" id="1.10.357.10:FF:000009">
    <property type="entry name" value="HTH-type transcriptional regulator BetI"/>
    <property type="match status" value="1"/>
</dbReference>
<dbReference type="Gene3D" id="1.10.357.10">
    <property type="entry name" value="Tetracycline Repressor, domain 2"/>
    <property type="match status" value="1"/>
</dbReference>
<dbReference type="HAMAP" id="MF_00768">
    <property type="entry name" value="HTH_type_BetI"/>
    <property type="match status" value="1"/>
</dbReference>
<dbReference type="InterPro" id="IPR039538">
    <property type="entry name" value="BetI_C"/>
</dbReference>
<dbReference type="InterPro" id="IPR023772">
    <property type="entry name" value="DNA-bd_HTH_TetR-type_CS"/>
</dbReference>
<dbReference type="InterPro" id="IPR009057">
    <property type="entry name" value="Homeodomain-like_sf"/>
</dbReference>
<dbReference type="InterPro" id="IPR050109">
    <property type="entry name" value="HTH-type_TetR-like_transc_reg"/>
</dbReference>
<dbReference type="InterPro" id="IPR001647">
    <property type="entry name" value="HTH_TetR"/>
</dbReference>
<dbReference type="InterPro" id="IPR036271">
    <property type="entry name" value="Tet_transcr_reg_TetR-rel_C_sf"/>
</dbReference>
<dbReference type="InterPro" id="IPR017757">
    <property type="entry name" value="Tscrpt_rep_BetI"/>
</dbReference>
<dbReference type="NCBIfam" id="TIGR03384">
    <property type="entry name" value="betaine_BetI"/>
    <property type="match status" value="1"/>
</dbReference>
<dbReference type="NCBIfam" id="NF001978">
    <property type="entry name" value="PRK00767.1"/>
    <property type="match status" value="1"/>
</dbReference>
<dbReference type="PANTHER" id="PTHR30055:SF234">
    <property type="entry name" value="HTH-TYPE TRANSCRIPTIONAL REGULATOR BETI"/>
    <property type="match status" value="1"/>
</dbReference>
<dbReference type="PANTHER" id="PTHR30055">
    <property type="entry name" value="HTH-TYPE TRANSCRIPTIONAL REGULATOR RUTR"/>
    <property type="match status" value="1"/>
</dbReference>
<dbReference type="Pfam" id="PF13977">
    <property type="entry name" value="TetR_C_6"/>
    <property type="match status" value="1"/>
</dbReference>
<dbReference type="Pfam" id="PF00440">
    <property type="entry name" value="TetR_N"/>
    <property type="match status" value="1"/>
</dbReference>
<dbReference type="PRINTS" id="PR00455">
    <property type="entry name" value="HTHTETR"/>
</dbReference>
<dbReference type="SUPFAM" id="SSF46689">
    <property type="entry name" value="Homeodomain-like"/>
    <property type="match status" value="1"/>
</dbReference>
<dbReference type="SUPFAM" id="SSF48498">
    <property type="entry name" value="Tetracyclin repressor-like, C-terminal domain"/>
    <property type="match status" value="1"/>
</dbReference>
<dbReference type="PROSITE" id="PS01081">
    <property type="entry name" value="HTH_TETR_1"/>
    <property type="match status" value="1"/>
</dbReference>
<dbReference type="PROSITE" id="PS50977">
    <property type="entry name" value="HTH_TETR_2"/>
    <property type="match status" value="1"/>
</dbReference>
<accession>Q1RFM1</accession>
<reference key="1">
    <citation type="journal article" date="2006" name="Proc. Natl. Acad. Sci. U.S.A.">
        <title>Identification of genes subject to positive selection in uropathogenic strains of Escherichia coli: a comparative genomics approach.</title>
        <authorList>
            <person name="Chen S.L."/>
            <person name="Hung C.-S."/>
            <person name="Xu J."/>
            <person name="Reigstad C.S."/>
            <person name="Magrini V."/>
            <person name="Sabo A."/>
            <person name="Blasiar D."/>
            <person name="Bieri T."/>
            <person name="Meyer R.R."/>
            <person name="Ozersky P."/>
            <person name="Armstrong J.R."/>
            <person name="Fulton R.S."/>
            <person name="Latreille J.P."/>
            <person name="Spieth J."/>
            <person name="Hooton T.M."/>
            <person name="Mardis E.R."/>
            <person name="Hultgren S.J."/>
            <person name="Gordon J.I."/>
        </authorList>
    </citation>
    <scope>NUCLEOTIDE SEQUENCE [LARGE SCALE GENOMIC DNA]</scope>
    <source>
        <strain>UTI89 / UPEC</strain>
    </source>
</reference>
<evidence type="ECO:0000250" key="1"/>
<evidence type="ECO:0000255" key="2">
    <source>
        <dbReference type="HAMAP-Rule" id="MF_00768"/>
    </source>
</evidence>
<evidence type="ECO:0000305" key="3"/>
<proteinExistence type="inferred from homology"/>
<keyword id="KW-0238">DNA-binding</keyword>
<keyword id="KW-0678">Repressor</keyword>
<keyword id="KW-0804">Transcription</keyword>
<keyword id="KW-0805">Transcription regulation</keyword>